<reference evidence="7 9" key="1">
    <citation type="journal article" date="2003" name="Gene">
        <title>TSRC1, a widely expressed gene containing seven thrombospondin type I repeats.</title>
        <authorList>
            <person name="Buchner D.A."/>
            <person name="Meisler M.H."/>
        </authorList>
    </citation>
    <scope>NUCLEOTIDE SEQUENCE [MRNA]</scope>
    <scope>TISSUE SPECIFICITY</scope>
    <source>
        <strain evidence="9">C57BL/6J</strain>
    </source>
</reference>
<reference evidence="8" key="2">
    <citation type="journal article" date="2004" name="Genome Res.">
        <title>The status, quality, and expansion of the NIH full-length cDNA project: the Mammalian Gene Collection (MGC).</title>
        <authorList>
            <consortium name="The MGC Project Team"/>
        </authorList>
    </citation>
    <scope>NUCLEOTIDE SEQUENCE [LARGE SCALE MRNA]</scope>
</reference>
<gene>
    <name evidence="10" type="primary">Adamtsl4</name>
    <name evidence="9 10" type="synonym">Tsrc1</name>
</gene>
<name>ATL4_MOUSE</name>
<keyword id="KW-0053">Apoptosis</keyword>
<keyword id="KW-0272">Extracellular matrix</keyword>
<keyword id="KW-0325">Glycoprotein</keyword>
<keyword id="KW-1185">Reference proteome</keyword>
<keyword id="KW-0677">Repeat</keyword>
<keyword id="KW-0964">Secreted</keyword>
<keyword id="KW-0732">Signal</keyword>
<proteinExistence type="evidence at transcript level"/>
<comment type="function">
    <text evidence="1">Positive regulation of apoptosis. May facilitate FBN1 microfibril biogenesis (By similarity).</text>
</comment>
<comment type="subunit">
    <text evidence="1">Interacts with CTSB. Interacts with FBN1 (By similarity).</text>
</comment>
<comment type="subcellular location">
    <subcellularLocation>
        <location evidence="1">Secreted</location>
        <location evidence="1">Extracellular space</location>
        <location evidence="1">Extracellular matrix</location>
    </subcellularLocation>
    <text evidence="1">Colocalizes with FMN1 microfibrils in the eye ECM.</text>
</comment>
<comment type="tissue specificity">
    <text evidence="6">Widely expressed in a range of tissues. Especially prevalent in brain, spinal cord, muscle, lung and heart.</text>
</comment>
<comment type="PTM">
    <text evidence="1">Glycosylated (By similarity). Can be O-fucosylated by POFUT2 on a serine or a threonine residue found within the consensus sequence C1-X(2)-(S/T)-C2-G of the TSP type-1 repeat domains where C1 and C2 are the first and second cysteine residue of the repeat, respectively. Fucosylated repeats can then be further glycosylated by the addition of a beta-1,3-glucose residue by the glucosyltransferase, B3GALTL. Fucosylation mediates the efficient secretion of ADAMTS family members. Can also be C-glycosylated with one or two mannose molecules on tryptophan residues within the consensus sequence W-X-X-W of the TPRs, and N-glycosylated. These other glycosylations can also facilitate secretion (By similarity).</text>
</comment>
<comment type="caution">
    <text evidence="7">Although similar to members of the ADAMTS family, it lacks the metalloprotease and disintegrin-like domains which are typical of that family.</text>
</comment>
<accession>Q80T21</accession>
<accession>Q148X6</accession>
<protein>
    <recommendedName>
        <fullName>ADAMTS-like protein 4</fullName>
        <shortName>ADAMTSL-4</shortName>
    </recommendedName>
    <alternativeName>
        <fullName>Thrombospondin repeat-containing protein 1</fullName>
    </alternativeName>
</protein>
<dbReference type="EMBL" id="AY158701">
    <property type="protein sequence ID" value="AAO17738.1"/>
    <property type="molecule type" value="mRNA"/>
</dbReference>
<dbReference type="EMBL" id="BC117925">
    <property type="protein sequence ID" value="AAI17926.1"/>
    <property type="molecule type" value="mRNA"/>
</dbReference>
<dbReference type="CCDS" id="CCDS17618.1"/>
<dbReference type="RefSeq" id="NP_001288634.1">
    <property type="nucleotide sequence ID" value="NM_001301705.1"/>
</dbReference>
<dbReference type="RefSeq" id="NP_659148.2">
    <property type="nucleotide sequence ID" value="NM_144899.3"/>
</dbReference>
<dbReference type="RefSeq" id="XP_036018952.1">
    <property type="nucleotide sequence ID" value="XM_036163059.1"/>
</dbReference>
<dbReference type="SMR" id="Q80T21"/>
<dbReference type="BioGRID" id="230868">
    <property type="interactions" value="3"/>
</dbReference>
<dbReference type="FunCoup" id="Q80T21">
    <property type="interactions" value="58"/>
</dbReference>
<dbReference type="STRING" id="10090.ENSMUSP00000113424"/>
<dbReference type="GlyCosmos" id="Q80T21">
    <property type="glycosylation" value="2 sites, No reported glycans"/>
</dbReference>
<dbReference type="GlyGen" id="Q80T21">
    <property type="glycosylation" value="6 sites, 2 N-linked glycans (3 sites)"/>
</dbReference>
<dbReference type="iPTMnet" id="Q80T21"/>
<dbReference type="PhosphoSitePlus" id="Q80T21"/>
<dbReference type="CPTAC" id="non-CPTAC-3560"/>
<dbReference type="PaxDb" id="10090-ENSMUSP00000015994"/>
<dbReference type="PeptideAtlas" id="Q80T21"/>
<dbReference type="ProteomicsDB" id="265150"/>
<dbReference type="Antibodypedia" id="1665">
    <property type="antibodies" value="99 antibodies from 20 providers"/>
</dbReference>
<dbReference type="DNASU" id="229595"/>
<dbReference type="Ensembl" id="ENSMUST00000015994.4">
    <property type="protein sequence ID" value="ENSMUSP00000015994.4"/>
    <property type="gene ID" value="ENSMUSG00000015850.12"/>
</dbReference>
<dbReference type="Ensembl" id="ENSMUST00000117782.8">
    <property type="protein sequence ID" value="ENSMUSP00000113424.2"/>
    <property type="gene ID" value="ENSMUSG00000015850.12"/>
</dbReference>
<dbReference type="GeneID" id="229595"/>
<dbReference type="KEGG" id="mmu:229595"/>
<dbReference type="UCSC" id="uc008qkm.2">
    <property type="organism name" value="mouse"/>
</dbReference>
<dbReference type="AGR" id="MGI:2389008"/>
<dbReference type="CTD" id="54507"/>
<dbReference type="MGI" id="MGI:2389008">
    <property type="gene designation" value="Adamtsl4"/>
</dbReference>
<dbReference type="VEuPathDB" id="HostDB:ENSMUSG00000015850"/>
<dbReference type="eggNOG" id="KOG3538">
    <property type="taxonomic scope" value="Eukaryota"/>
</dbReference>
<dbReference type="eggNOG" id="KOG4597">
    <property type="taxonomic scope" value="Eukaryota"/>
</dbReference>
<dbReference type="GeneTree" id="ENSGT00940000161136"/>
<dbReference type="HOGENOM" id="CLU_000660_6_0_1"/>
<dbReference type="InParanoid" id="Q80T21"/>
<dbReference type="OMA" id="SHWEVRT"/>
<dbReference type="OrthoDB" id="10062690at2759"/>
<dbReference type="PhylomeDB" id="Q80T21"/>
<dbReference type="TreeFam" id="TF316874"/>
<dbReference type="Reactome" id="R-MMU-5173214">
    <property type="pathway name" value="O-glycosylation of TSR domain-containing proteins"/>
</dbReference>
<dbReference type="BioGRID-ORCS" id="229595">
    <property type="hits" value="5 hits in 76 CRISPR screens"/>
</dbReference>
<dbReference type="ChiTaRS" id="Adamtsl4">
    <property type="organism name" value="mouse"/>
</dbReference>
<dbReference type="PRO" id="PR:Q80T21"/>
<dbReference type="Proteomes" id="UP000000589">
    <property type="component" value="Chromosome 3"/>
</dbReference>
<dbReference type="RNAct" id="Q80T21">
    <property type="molecule type" value="protein"/>
</dbReference>
<dbReference type="Bgee" id="ENSMUSG00000015850">
    <property type="expression patterns" value="Expressed in interventricular septum and 153 other cell types or tissues"/>
</dbReference>
<dbReference type="ExpressionAtlas" id="Q80T21">
    <property type="expression patterns" value="baseline and differential"/>
</dbReference>
<dbReference type="GO" id="GO:0031012">
    <property type="term" value="C:extracellular matrix"/>
    <property type="evidence" value="ECO:0000314"/>
    <property type="project" value="MGI"/>
</dbReference>
<dbReference type="GO" id="GO:0005576">
    <property type="term" value="C:extracellular region"/>
    <property type="evidence" value="ECO:0007669"/>
    <property type="project" value="UniProtKB-KW"/>
</dbReference>
<dbReference type="GO" id="GO:0005614">
    <property type="term" value="C:interstitial matrix"/>
    <property type="evidence" value="ECO:0000314"/>
    <property type="project" value="MGI"/>
</dbReference>
<dbReference type="GO" id="GO:0002020">
    <property type="term" value="F:protease binding"/>
    <property type="evidence" value="ECO:0000250"/>
    <property type="project" value="UniProtKB"/>
</dbReference>
<dbReference type="GO" id="GO:0006915">
    <property type="term" value="P:apoptotic process"/>
    <property type="evidence" value="ECO:0007669"/>
    <property type="project" value="UniProtKB-KW"/>
</dbReference>
<dbReference type="GO" id="GO:0002064">
    <property type="term" value="P:epithelial cell development"/>
    <property type="evidence" value="ECO:0000315"/>
    <property type="project" value="MGI"/>
</dbReference>
<dbReference type="GO" id="GO:0030198">
    <property type="term" value="P:extracellular matrix organization"/>
    <property type="evidence" value="ECO:0000314"/>
    <property type="project" value="MGI"/>
</dbReference>
<dbReference type="GO" id="GO:0070285">
    <property type="term" value="P:pigment cell development"/>
    <property type="evidence" value="ECO:0000315"/>
    <property type="project" value="MGI"/>
</dbReference>
<dbReference type="GO" id="GO:0043065">
    <property type="term" value="P:positive regulation of apoptotic process"/>
    <property type="evidence" value="ECO:0000250"/>
    <property type="project" value="UniProtKB"/>
</dbReference>
<dbReference type="FunFam" id="2.60.120.830:FF:000001">
    <property type="entry name" value="A disintegrin and metalloproteinase with thrombospondin motifs 1"/>
    <property type="match status" value="1"/>
</dbReference>
<dbReference type="FunFam" id="2.20.100.10:FF:000005">
    <property type="entry name" value="ADAM metallopeptidase with thrombospondin type 1 motif 9"/>
    <property type="match status" value="2"/>
</dbReference>
<dbReference type="FunFam" id="2.20.100.10:FF:000039">
    <property type="entry name" value="thrombospondin type-1 domain-containing protein 4"/>
    <property type="match status" value="1"/>
</dbReference>
<dbReference type="Gene3D" id="2.60.120.830">
    <property type="match status" value="1"/>
</dbReference>
<dbReference type="Gene3D" id="2.20.100.10">
    <property type="entry name" value="Thrombospondin type-1 (TSP1) repeat"/>
    <property type="match status" value="6"/>
</dbReference>
<dbReference type="InterPro" id="IPR050439">
    <property type="entry name" value="ADAMTS_ADAMTS-like"/>
</dbReference>
<dbReference type="InterPro" id="IPR045371">
    <property type="entry name" value="ADAMTS_CR_3"/>
</dbReference>
<dbReference type="InterPro" id="IPR010294">
    <property type="entry name" value="ADAMTS_spacer1"/>
</dbReference>
<dbReference type="InterPro" id="IPR010909">
    <property type="entry name" value="PLAC"/>
</dbReference>
<dbReference type="InterPro" id="IPR000884">
    <property type="entry name" value="TSP1_rpt"/>
</dbReference>
<dbReference type="InterPro" id="IPR036383">
    <property type="entry name" value="TSP1_rpt_sf"/>
</dbReference>
<dbReference type="PANTHER" id="PTHR13723">
    <property type="entry name" value="ADAMTS A DISINTEGRIN AND METALLOPROTEASE WITH THROMBOSPONDIN MOTIFS PROTEASE"/>
    <property type="match status" value="1"/>
</dbReference>
<dbReference type="PANTHER" id="PTHR13723:SF144">
    <property type="entry name" value="ADAMTS-LIKE PROTEIN 4"/>
    <property type="match status" value="1"/>
</dbReference>
<dbReference type="Pfam" id="PF19236">
    <property type="entry name" value="ADAMTS_CR_3"/>
    <property type="match status" value="1"/>
</dbReference>
<dbReference type="Pfam" id="PF05986">
    <property type="entry name" value="ADAMTS_spacer1"/>
    <property type="match status" value="1"/>
</dbReference>
<dbReference type="Pfam" id="PF08686">
    <property type="entry name" value="PLAC"/>
    <property type="match status" value="1"/>
</dbReference>
<dbReference type="Pfam" id="PF19030">
    <property type="entry name" value="TSP1_ADAMTS"/>
    <property type="match status" value="6"/>
</dbReference>
<dbReference type="Pfam" id="PF00090">
    <property type="entry name" value="TSP_1"/>
    <property type="match status" value="1"/>
</dbReference>
<dbReference type="SMART" id="SM00209">
    <property type="entry name" value="TSP1"/>
    <property type="match status" value="7"/>
</dbReference>
<dbReference type="SUPFAM" id="SSF82895">
    <property type="entry name" value="TSP-1 type 1 repeat"/>
    <property type="match status" value="6"/>
</dbReference>
<dbReference type="PROSITE" id="PS50900">
    <property type="entry name" value="PLAC"/>
    <property type="match status" value="1"/>
</dbReference>
<dbReference type="PROSITE" id="PS50092">
    <property type="entry name" value="TSP1"/>
    <property type="match status" value="6"/>
</dbReference>
<evidence type="ECO:0000250" key="1"/>
<evidence type="ECO:0000255" key="2"/>
<evidence type="ECO:0000255" key="3">
    <source>
        <dbReference type="PROSITE-ProRule" id="PRU00210"/>
    </source>
</evidence>
<evidence type="ECO:0000255" key="4">
    <source>
        <dbReference type="PROSITE-ProRule" id="PRU00233"/>
    </source>
</evidence>
<evidence type="ECO:0000256" key="5">
    <source>
        <dbReference type="SAM" id="MobiDB-lite"/>
    </source>
</evidence>
<evidence type="ECO:0000269" key="6">
    <source>
    </source>
</evidence>
<evidence type="ECO:0000305" key="7"/>
<evidence type="ECO:0000312" key="8">
    <source>
        <dbReference type="EMBL" id="AAI17926.1"/>
    </source>
</evidence>
<evidence type="ECO:0000312" key="9">
    <source>
        <dbReference type="EMBL" id="AAO17738.1"/>
    </source>
</evidence>
<evidence type="ECO:0000312" key="10">
    <source>
        <dbReference type="MGI" id="MGI:2389008"/>
    </source>
</evidence>
<organism>
    <name type="scientific">Mus musculus</name>
    <name type="common">Mouse</name>
    <dbReference type="NCBI Taxonomy" id="10090"/>
    <lineage>
        <taxon>Eukaryota</taxon>
        <taxon>Metazoa</taxon>
        <taxon>Chordata</taxon>
        <taxon>Craniata</taxon>
        <taxon>Vertebrata</taxon>
        <taxon>Euteleostomi</taxon>
        <taxon>Mammalia</taxon>
        <taxon>Eutheria</taxon>
        <taxon>Euarchontoglires</taxon>
        <taxon>Glires</taxon>
        <taxon>Rodentia</taxon>
        <taxon>Myomorpha</taxon>
        <taxon>Muroidea</taxon>
        <taxon>Muridae</taxon>
        <taxon>Murinae</taxon>
        <taxon>Mus</taxon>
        <taxon>Mus</taxon>
    </lineage>
</organism>
<sequence>MESWLGRLWLCMMLLLPLPQPCQDQELFGPSHQLPSEEGQVPEGLWGPWGRWASCSQPCGVGVQRRSRTCELHPALPLPPRPPRHPEAHRPRGQGSRPQTPRDPQSLYRPQPRGRGGPLRAPASQVGREETQEPQGAQRFRVRDPIKPGMFGYGRVPFALPLHRSRRHPHRPGQPKNSSTGEGMVPSQPPSTELASEKHGPHMQPPEPRSHSAETPRSGTAQTEVLPRTSSAPSYTGTPAPTSSFGDSRSFQGSLGPRMPPSPGSWSSPQGAERRHPPPFSPVPRSQQSRRHWRPPGPHRSPDGWLPLTRDSSPLWSIFAPSIPAPNCSGESEQMRACSQEPCPPEQPDPRALQCAAFDSQEFMGQLYQWEPFTEVQGSQRCELNCRPRGFRFYVRHTEKVQDGTLCQPGSLDICVAGRCLSPGCDGVLGSGRRPDGCGVCGGDGSTCRLVSGNLTDRGGPLGYQKILWIPAGASHLHISQLRPSSNYLALRGPGGRSIINGNWAVDPPGSYTAIGTVFQYNRPPREEGKGESLSAEGPTTQPVDVYMIFQEDNPGVFYQYVISSPPAVLESPSTKPPALQPQPEMLRGEPLLPSAPRPVRAPGTLQRQVRIPQVPPPTRVRTAMGSSAGYWKQVGHSECSASCGKGVWHPIFLCISRESGEELDEQSCAVGARPPASPEPCHGPPCPPYWEAGEWTSCSRSCGPGTQHRQLLCRQEFGGGGSSVPPERCGHLPRPNITQPCQLHLCGHWEISSPWSQCSVRCGRGQRSRQVRCVGSNGDEVDKQECASGPPPPPSREACDMGPCTTAWFYSDWSSKCSAECGTGIQRRAVVCLRSGETLQGDPEAGSTEQGCPLRSRPPDMRACSLGPCERTWRWFTGPWSECSSECGSGTQHRDIICVSKLGAEFNVTSPSNCSHLPRPPALQPCQGQACEDKWFSTLWSPCSRSCQGGMQTREVQCLSGNQTLSSRCPPHLRPSRKRPCNSQPCNQRPDDQCKDSSPHCPLVVQARLCVYPYYTTTCCRSCAHVLEQSQLEPA</sequence>
<feature type="signal peptide" evidence="2">
    <location>
        <begin position="1"/>
        <end position="24"/>
    </location>
</feature>
<feature type="chain" id="PRO_0000257967" description="ADAMTS-like protein 4" evidence="2">
    <location>
        <begin position="25"/>
        <end position="1036"/>
    </location>
</feature>
<feature type="domain" description="TSP type-1 1" evidence="3">
    <location>
        <begin position="47"/>
        <end position="91"/>
    </location>
</feature>
<feature type="domain" description="TSP type-1 2" evidence="3">
    <location>
        <begin position="687"/>
        <end position="748"/>
    </location>
</feature>
<feature type="domain" description="TSP type-1 3" evidence="3">
    <location>
        <begin position="750"/>
        <end position="804"/>
    </location>
</feature>
<feature type="domain" description="TSP type-1 4" evidence="3">
    <location>
        <begin position="805"/>
        <end position="871"/>
    </location>
</feature>
<feature type="domain" description="TSP type-1 5" evidence="3">
    <location>
        <begin position="872"/>
        <end position="931"/>
    </location>
</feature>
<feature type="domain" description="TSP type-1 6" evidence="3">
    <location>
        <begin position="932"/>
        <end position="988"/>
    </location>
</feature>
<feature type="domain" description="PLAC" evidence="4">
    <location>
        <begin position="991"/>
        <end position="1028"/>
    </location>
</feature>
<feature type="region of interest" description="Disordered" evidence="5">
    <location>
        <begin position="73"/>
        <end position="149"/>
    </location>
</feature>
<feature type="region of interest" description="Disordered" evidence="5">
    <location>
        <begin position="163"/>
        <end position="308"/>
    </location>
</feature>
<feature type="compositionally biased region" description="Basic residues" evidence="5">
    <location>
        <begin position="163"/>
        <end position="173"/>
    </location>
</feature>
<feature type="compositionally biased region" description="Polar residues" evidence="5">
    <location>
        <begin position="215"/>
        <end position="253"/>
    </location>
</feature>
<feature type="glycosylation site" description="N-linked (GlcNAc...) asparagine" evidence="2">
    <location>
        <position position="454"/>
    </location>
</feature>
<feature type="glycosylation site" description="N-linked (GlcNAc...) asparagine" evidence="2">
    <location>
        <position position="737"/>
    </location>
</feature>
<feature type="sequence conflict" description="In Ref. 2; AAI17926." evidence="7" ref="2">
    <original>G</original>
    <variation>R</variation>
    <location>
        <position position="93"/>
    </location>
</feature>